<name>HEMH_BURM9</name>
<organism>
    <name type="scientific">Burkholderia mallei (strain NCTC 10229)</name>
    <dbReference type="NCBI Taxonomy" id="412022"/>
    <lineage>
        <taxon>Bacteria</taxon>
        <taxon>Pseudomonadati</taxon>
        <taxon>Pseudomonadota</taxon>
        <taxon>Betaproteobacteria</taxon>
        <taxon>Burkholderiales</taxon>
        <taxon>Burkholderiaceae</taxon>
        <taxon>Burkholderia</taxon>
        <taxon>pseudomallei group</taxon>
    </lineage>
</organism>
<proteinExistence type="inferred from homology"/>
<evidence type="ECO:0000255" key="1">
    <source>
        <dbReference type="HAMAP-Rule" id="MF_00323"/>
    </source>
</evidence>
<reference key="1">
    <citation type="journal article" date="2010" name="Genome Biol. Evol.">
        <title>Continuing evolution of Burkholderia mallei through genome reduction and large-scale rearrangements.</title>
        <authorList>
            <person name="Losada L."/>
            <person name="Ronning C.M."/>
            <person name="DeShazer D."/>
            <person name="Woods D."/>
            <person name="Fedorova N."/>
            <person name="Kim H.S."/>
            <person name="Shabalina S.A."/>
            <person name="Pearson T.R."/>
            <person name="Brinkac L."/>
            <person name="Tan P."/>
            <person name="Nandi T."/>
            <person name="Crabtree J."/>
            <person name="Badger J."/>
            <person name="Beckstrom-Sternberg S."/>
            <person name="Saqib M."/>
            <person name="Schutzer S.E."/>
            <person name="Keim P."/>
            <person name="Nierman W.C."/>
        </authorList>
    </citation>
    <scope>NUCLEOTIDE SEQUENCE [LARGE SCALE GENOMIC DNA]</scope>
    <source>
        <strain>NCTC 10229</strain>
    </source>
</reference>
<keyword id="KW-0963">Cytoplasm</keyword>
<keyword id="KW-0350">Heme biosynthesis</keyword>
<keyword id="KW-0408">Iron</keyword>
<keyword id="KW-0456">Lyase</keyword>
<keyword id="KW-0479">Metal-binding</keyword>
<keyword id="KW-0627">Porphyrin biosynthesis</keyword>
<comment type="function">
    <text evidence="1">Catalyzes the ferrous insertion into protoporphyrin IX.</text>
</comment>
<comment type="catalytic activity">
    <reaction evidence="1">
        <text>heme b + 2 H(+) = protoporphyrin IX + Fe(2+)</text>
        <dbReference type="Rhea" id="RHEA:22584"/>
        <dbReference type="ChEBI" id="CHEBI:15378"/>
        <dbReference type="ChEBI" id="CHEBI:29033"/>
        <dbReference type="ChEBI" id="CHEBI:57306"/>
        <dbReference type="ChEBI" id="CHEBI:60344"/>
        <dbReference type="EC" id="4.98.1.1"/>
    </reaction>
</comment>
<comment type="pathway">
    <text evidence="1">Porphyrin-containing compound metabolism; protoheme biosynthesis; protoheme from protoporphyrin-IX: step 1/1.</text>
</comment>
<comment type="subcellular location">
    <subcellularLocation>
        <location evidence="1">Cytoplasm</location>
    </subcellularLocation>
</comment>
<comment type="similarity">
    <text evidence="1">Belongs to the ferrochelatase family.</text>
</comment>
<gene>
    <name evidence="1" type="primary">hemH</name>
    <name type="ordered locus">BMA10229_A1104</name>
</gene>
<sequence>MSFDSVPRHALSMRFDLEPPSHASAAHRVAVLLVNLGTPDAPTPRAVRRYLAQFLSDPRVVEIPQLVWQVILCTLILPLRGRASAKKYAAVWLPEGSPLRVYTERQVESVKPLFAANGYRVIVDYAMRYGTPSIADVLAQLKRAGAERVLLLPMYPQYSSSTTATAFDAAFAALGRMRNQPEVRTVRHYADHPAYIHALAEQVRQYWAAHGRPAFDAGDKLVLSFHGVPKRTLDLGDPYHDQCQQTAALLMSALGLTTFECRVTFQSRFGKAEWLQPYTAPTLKELGAAGVRRADVFCPGFTADCLETIEEIGIEVRDEFVHGGGKEFHRIPCLNASPAWIAALGEIAAENLQGWPVRVAMAPEAVS</sequence>
<protein>
    <recommendedName>
        <fullName evidence="1">Ferrochelatase</fullName>
        <ecNumber evidence="1">4.98.1.1</ecNumber>
    </recommendedName>
    <alternativeName>
        <fullName evidence="1">Heme synthase</fullName>
    </alternativeName>
    <alternativeName>
        <fullName evidence="1">Protoheme ferro-lyase</fullName>
    </alternativeName>
</protein>
<dbReference type="EC" id="4.98.1.1" evidence="1"/>
<dbReference type="EMBL" id="CP000546">
    <property type="protein sequence ID" value="ABN03723.1"/>
    <property type="molecule type" value="Genomic_DNA"/>
</dbReference>
<dbReference type="SMR" id="A2S570"/>
<dbReference type="KEGG" id="bml:BMA10229_A1104"/>
<dbReference type="HOGENOM" id="CLU_018884_0_0_4"/>
<dbReference type="UniPathway" id="UPA00252">
    <property type="reaction ID" value="UER00325"/>
</dbReference>
<dbReference type="Proteomes" id="UP000002283">
    <property type="component" value="Chromosome I"/>
</dbReference>
<dbReference type="GO" id="GO:0005737">
    <property type="term" value="C:cytoplasm"/>
    <property type="evidence" value="ECO:0007669"/>
    <property type="project" value="UniProtKB-SubCell"/>
</dbReference>
<dbReference type="GO" id="GO:0004325">
    <property type="term" value="F:ferrochelatase activity"/>
    <property type="evidence" value="ECO:0007669"/>
    <property type="project" value="UniProtKB-UniRule"/>
</dbReference>
<dbReference type="GO" id="GO:0046872">
    <property type="term" value="F:metal ion binding"/>
    <property type="evidence" value="ECO:0007669"/>
    <property type="project" value="UniProtKB-KW"/>
</dbReference>
<dbReference type="GO" id="GO:0006783">
    <property type="term" value="P:heme biosynthetic process"/>
    <property type="evidence" value="ECO:0007669"/>
    <property type="project" value="UniProtKB-UniRule"/>
</dbReference>
<dbReference type="CDD" id="cd00419">
    <property type="entry name" value="Ferrochelatase_C"/>
    <property type="match status" value="1"/>
</dbReference>
<dbReference type="CDD" id="cd03411">
    <property type="entry name" value="Ferrochelatase_N"/>
    <property type="match status" value="1"/>
</dbReference>
<dbReference type="FunFam" id="3.40.50.1400:FF:000002">
    <property type="entry name" value="Ferrochelatase"/>
    <property type="match status" value="1"/>
</dbReference>
<dbReference type="Gene3D" id="3.40.50.1400">
    <property type="match status" value="2"/>
</dbReference>
<dbReference type="HAMAP" id="MF_00323">
    <property type="entry name" value="Ferrochelatase"/>
    <property type="match status" value="1"/>
</dbReference>
<dbReference type="InterPro" id="IPR001015">
    <property type="entry name" value="Ferrochelatase"/>
</dbReference>
<dbReference type="InterPro" id="IPR019772">
    <property type="entry name" value="Ferrochelatase_AS"/>
</dbReference>
<dbReference type="InterPro" id="IPR033644">
    <property type="entry name" value="Ferrochelatase_C"/>
</dbReference>
<dbReference type="InterPro" id="IPR033659">
    <property type="entry name" value="Ferrochelatase_N"/>
</dbReference>
<dbReference type="NCBIfam" id="TIGR00109">
    <property type="entry name" value="hemH"/>
    <property type="match status" value="1"/>
</dbReference>
<dbReference type="PANTHER" id="PTHR11108">
    <property type="entry name" value="FERROCHELATASE"/>
    <property type="match status" value="1"/>
</dbReference>
<dbReference type="PANTHER" id="PTHR11108:SF1">
    <property type="entry name" value="FERROCHELATASE, MITOCHONDRIAL"/>
    <property type="match status" value="1"/>
</dbReference>
<dbReference type="Pfam" id="PF00762">
    <property type="entry name" value="Ferrochelatase"/>
    <property type="match status" value="1"/>
</dbReference>
<dbReference type="SUPFAM" id="SSF53800">
    <property type="entry name" value="Chelatase"/>
    <property type="match status" value="1"/>
</dbReference>
<dbReference type="PROSITE" id="PS00534">
    <property type="entry name" value="FERROCHELATASE"/>
    <property type="match status" value="1"/>
</dbReference>
<feature type="chain" id="PRO_1000019280" description="Ferrochelatase">
    <location>
        <begin position="1"/>
        <end position="367"/>
    </location>
</feature>
<feature type="binding site" evidence="1">
    <location>
        <position position="226"/>
    </location>
    <ligand>
        <name>Fe cation</name>
        <dbReference type="ChEBI" id="CHEBI:24875"/>
    </ligand>
</feature>
<feature type="binding site" evidence="1">
    <location>
        <position position="307"/>
    </location>
    <ligand>
        <name>Fe cation</name>
        <dbReference type="ChEBI" id="CHEBI:24875"/>
    </ligand>
</feature>
<accession>A2S570</accession>